<comment type="function">
    <text evidence="4">Part of the inner chloroplast membrane translocon complex (TIC) which associates with the outer chloroplast membrane translocon complex (TOC) and forms a supercomplex involved in protein precursor import into the chloroplast stroma (PubMed:30464337). Required for the import of HSP93, TIC40 and RBCS protein precursors in the chloroplast stroma (PubMed:30464337). Links the outer and inner membrane translocons of the chloroplast envelope (PubMed:30464337).</text>
</comment>
<comment type="subunit">
    <text evidence="4">Part of the TIC complex, which can interact with components of the TOC complex to form a larger import complex (PubMed:30464337). Interacts with the TOC complex component TOC75-3 (PubMed:30464337).</text>
</comment>
<comment type="subcellular location">
    <subcellularLocation>
        <location evidence="4">Plastid</location>
        <location evidence="4">Chloroplast inner membrane</location>
        <topology evidence="1">Single-pass membrane protein</topology>
    </subcellularLocation>
    <subcellularLocation>
        <location evidence="4">Plastid</location>
        <location evidence="4">Chloroplast intermembrane space</location>
    </subcellularLocation>
</comment>
<comment type="disruption phenotype">
    <text evidence="3">Embryonic lethality when homozygous (PubMed:15266054). Embryo development arrested at globular stage (PubMed:15266054).</text>
</comment>
<comment type="similarity">
    <text evidence="7">Belongs to the TamB family.</text>
</comment>
<comment type="sequence caution" evidence="7">
    <conflict type="erroneous gene model prediction">
        <sequence resource="EMBL-CDS" id="AAD31376"/>
    </conflict>
</comment>
<protein>
    <recommendedName>
        <fullName evidence="7">Protein TIC236, chloroplastic</fullName>
    </recommendedName>
    <alternativeName>
        <fullName evidence="7">236 kDa translocon at the inner-envelope-membrane of chloroplasts</fullName>
    </alternativeName>
    <alternativeName>
        <fullName evidence="5">Protein EMBRYO DEFECTIVE 2410</fullName>
    </alternativeName>
</protein>
<sequence>MSLRLQNPFLSTPLLHGSFNRREKRINVARRAFRSKRIYSEKKQNDWLAKVAKFSQFCGKNVQLLRKSLDSRSRMEVKCLKEPFVRSKDLVRSLAPVWEEGLFFLRCSVFFAVISGVCLLVWYGQNKARVFVETKLLPSVCSVLSETIQREVDFGKVRRVSPLCITLEASSIGPHGEEFSCGEVPTMKVCVRPFASLRRGKIVVDAILSNPTVLVAQKKDFTWLGIPLSDTTLPSHLSSEEGIDFRTKTRRVSREEAGIRWDEERDNDARKAAEIGYIVPCKNYSQAKDNAVKHDRRFTEIANPNSFICMDEKMHSAEQHCMDPGVEYDVKHAELEKSFGIKIPGSGLKFLSKMLKVPRKYKFKWNSKSHKNSMSNISAKKRILERSASAALSYFHSLSQQKLDEPSVLSTNYDGLSLDMLLVKGDREISNQYDRHVPYGEQSLANDLDGKGYRVRGKRLLGVKKASTLDKFTVSCDPFLMTVDRLCALLQTKRSPSVEDIVNSSESETLSSQRGDISMNVVNQNTDDVPHGNRSGNQPRDFTFKKHEHQPVANHWRPSWPRNKKLKEAVFNILTGSSKKLTGRADPNAPHLSDELEKLPAVYVEKTLPVMLDSVQFKGGTLLLLAYGDTEPREMRNVHGHVKFQNHYGRVYVQLGGNCNMWRSDVTSEDGGLLSVDVFVDTVEQNWHANLNVANFFVPIFERILEIPIEWSKGRATGEVHLCMSRGESFPNLHGQLDVTGLGFHINDAPSSFSDVSASLSFRGQRIFLHNANGWFGKVPLEASGDFGIHPDEGEFHLMCQVPYVEINALMKTFKMKPLFFPLAGSVTAVFNCQGPLDAPVFVGSCMVSRKIAYLSPDLPTSLAYEAMLKNKEAGAVAAFDRVPFSYLSANFTFNTDNCVADLYGIRATLVDGGEIRGAGNAWICPEGEVDDTALDVNFSGNISFDKVLHRYMPEYFNIGMLKLGDLTGETKLSGALLKPRFDIKWAAPKADGSLTDARGDIVISHDNIIVNSSSVAFDLFTKLDTSYHDPCLSHQDFTQGEAMPFVVEGLDLDLRMRGFEFFSLVSSYPFDSPRPTHLKATGRIKFLGKIKRHSTTKDGDVGSDKCEDAAAISSLDGDISISSLKLNQLILAPQLSGRLSVSRDHVKLDAAGRPDESLTLDFIGPLQPNSDENVQSGKLLSFSLQKGQLRANACFQPQQSATLEIRNFPLDELELASLRGLIQKAEIQLNLQKRRGHGLLSVIRPKFSGVLGEALDVAVRWSGDVCFMLSGRLEVMITVEKTILEQSNSRYELQGEYVLPGSRDRDLGQKEAGSFLMRAMTGHLGSVISSMGRWRMRLEVPKAEVAEMLPLARLLSRSTDPAVHSRSKDLFIQSVQNLCLQAENLRDLLEEIRGYYTPPSEVVLEDLSLPGLAELKGHWHGSLDASGGGNGDTLAEFDFHGDDWEWGTYKTQRVLATGSYNNDDGLRLKEMLIQKGNATLHADGTLLGPKTNLHFAVLNFPVSLIPTLVEVVESSATDIVHSLRKLLSPIKGILHMEGDLRGSLEKPECDVQVRLLDGAVGGIDLGRAEVFASLTSNSRFLFNSNFEPFVQNGHVHIQGSVPVSFSQKNMSEGEVSETDRGGAVKIPSWAKEKEDDEKRTSRDRSEERWDSQLAESLKGLYWNILDAGEVRLEADIKDGGMTLLTAISPYANWLQGNADIRLQVGGTVDHPVLDGSASFHRASISSPVLRKPLTNFGGTLHVKSNRLCITSLESRVSRKGKLVVKGNLPLRSNEASAGDGIELKCEVLEVRAKNFLSCQVDTQLQITGSMLQPTISGNIKLSQGEAYLPHDKGGGAAPLNRLAANQYSIPGAAINQAVSSRYFARFFGTERASSGMKFSQSTGKSNSVEKEIEEVKMKPNMDIRLSDMKLVLGPELRIMYPLILNFAVSGELELDGMAHPKFIKPKGVLTFENGDVNLVATQVRLKREHLNVAKFEPEHGLDPLLDLALVGSEWQFRVQSRASNWQDKLVVTSTRSVEQDALSPSEAAKVFESQLAESILEGDGQLAFKKLATATLGTIMPRIEGKGEFGQARWRLVYAPQIPSLLSVDPTVDPLKSLASNISFGTEVEVQLGKRLQASVVRQMKDSEMAMQWTLIYQLTSRLRVLLQSAPSKRLLFEYSATSQD</sequence>
<feature type="transit peptide" description="Chloroplast" evidence="1">
    <location>
        <begin position="1"/>
        <end position="37"/>
    </location>
</feature>
<feature type="chain" id="PRO_0000447404" description="Protein TIC236, chloroplastic">
    <location>
        <begin position="38"/>
        <end position="2166"/>
    </location>
</feature>
<feature type="topological domain" description="Stromal" evidence="8">
    <location>
        <begin position="38"/>
        <end position="101"/>
    </location>
</feature>
<feature type="transmembrane region" description="Helical" evidence="1">
    <location>
        <begin position="102"/>
        <end position="122"/>
    </location>
</feature>
<feature type="topological domain" description="Chloroplast intermembrane" evidence="8">
    <location>
        <begin position="123"/>
        <end position="2166"/>
    </location>
</feature>
<feature type="region of interest" description="Disordered" evidence="2">
    <location>
        <begin position="1611"/>
        <end position="1649"/>
    </location>
</feature>
<feature type="compositionally biased region" description="Basic and acidic residues" evidence="2">
    <location>
        <begin position="1631"/>
        <end position="1649"/>
    </location>
</feature>
<gene>
    <name evidence="6" type="primary">TIC236</name>
    <name evidence="5" type="synonym">EMB2410</name>
    <name evidence="9" type="ordered locus">At2g25660</name>
</gene>
<reference key="1">
    <citation type="journal article" date="1999" name="Nature">
        <title>Sequence and analysis of chromosome 2 of the plant Arabidopsis thaliana.</title>
        <authorList>
            <person name="Lin X."/>
            <person name="Kaul S."/>
            <person name="Rounsley S.D."/>
            <person name="Shea T.P."/>
            <person name="Benito M.-I."/>
            <person name="Town C.D."/>
            <person name="Fujii C.Y."/>
            <person name="Mason T.M."/>
            <person name="Bowman C.L."/>
            <person name="Barnstead M.E."/>
            <person name="Feldblyum T.V."/>
            <person name="Buell C.R."/>
            <person name="Ketchum K.A."/>
            <person name="Lee J.J."/>
            <person name="Ronning C.M."/>
            <person name="Koo H.L."/>
            <person name="Moffat K.S."/>
            <person name="Cronin L.A."/>
            <person name="Shen M."/>
            <person name="Pai G."/>
            <person name="Van Aken S."/>
            <person name="Umayam L."/>
            <person name="Tallon L.J."/>
            <person name="Gill J.E."/>
            <person name="Adams M.D."/>
            <person name="Carrera A.J."/>
            <person name="Creasy T.H."/>
            <person name="Goodman H.M."/>
            <person name="Somerville C.R."/>
            <person name="Copenhaver G.P."/>
            <person name="Preuss D."/>
            <person name="Nierman W.C."/>
            <person name="White O."/>
            <person name="Eisen J.A."/>
            <person name="Salzberg S.L."/>
            <person name="Fraser C.M."/>
            <person name="Venter J.C."/>
        </authorList>
    </citation>
    <scope>NUCLEOTIDE SEQUENCE [LARGE SCALE GENOMIC DNA]</scope>
    <source>
        <strain>cv. Columbia</strain>
    </source>
</reference>
<reference key="2">
    <citation type="journal article" date="2017" name="Plant J.">
        <title>Araport11: a complete reannotation of the Arabidopsis thaliana reference genome.</title>
        <authorList>
            <person name="Cheng C.Y."/>
            <person name="Krishnakumar V."/>
            <person name="Chan A.P."/>
            <person name="Thibaud-Nissen F."/>
            <person name="Schobel S."/>
            <person name="Town C.D."/>
        </authorList>
    </citation>
    <scope>GENOME REANNOTATION</scope>
    <source>
        <strain>cv. Columbia</strain>
    </source>
</reference>
<reference key="3">
    <citation type="journal article" date="2004" name="Plant Physiol.">
        <title>Identification of genes required for embryo development in Arabidopsis.</title>
        <authorList>
            <person name="Tzafrir I."/>
            <person name="Pena-Muralla R."/>
            <person name="Dickerman A."/>
            <person name="Berg M."/>
            <person name="Rogers R."/>
            <person name="Hutchens S."/>
            <person name="Sweeney T.C."/>
            <person name="McElver J."/>
            <person name="Aux G."/>
            <person name="Patton D."/>
            <person name="Meinke D."/>
        </authorList>
    </citation>
    <scope>DISRUPTION PHENOTYPE</scope>
</reference>
<reference key="4">
    <citation type="journal article" date="2018" name="Nature">
        <title>TIC236 links the outer and inner membrane translocons of the chloroplast.</title>
        <authorList>
            <person name="Chen Y.L."/>
            <person name="Chen L.J."/>
            <person name="Chu C.C."/>
            <person name="Huang P.K."/>
            <person name="Wen J.R."/>
            <person name="Li H.M."/>
        </authorList>
    </citation>
    <scope>FUNCTION</scope>
    <scope>INTERACTION WITH TOC75-3</scope>
    <scope>SUBCELLULAR LOCATION</scope>
    <scope>TOPOLOGY</scope>
</reference>
<dbReference type="EMBL" id="AC006053">
    <property type="protein sequence ID" value="AAD31376.1"/>
    <property type="status" value="ALT_SEQ"/>
    <property type="molecule type" value="Genomic_DNA"/>
</dbReference>
<dbReference type="EMBL" id="CP002685">
    <property type="protein sequence ID" value="AEC07731.1"/>
    <property type="molecule type" value="Genomic_DNA"/>
</dbReference>
<dbReference type="EMBL" id="CP002685">
    <property type="protein sequence ID" value="ANM61810.1"/>
    <property type="molecule type" value="Genomic_DNA"/>
</dbReference>
<dbReference type="PIR" id="B84651">
    <property type="entry name" value="B84651"/>
</dbReference>
<dbReference type="RefSeq" id="NP_001324007.1">
    <property type="nucleotide sequence ID" value="NM_001336009.1"/>
</dbReference>
<dbReference type="RefSeq" id="NP_180137.3">
    <property type="nucleotide sequence ID" value="NM_128125.3"/>
</dbReference>
<dbReference type="FunCoup" id="F4ISL7">
    <property type="interactions" value="1242"/>
</dbReference>
<dbReference type="STRING" id="3702.F4ISL7"/>
<dbReference type="TCDB" id="9.B.121.6.11">
    <property type="family name" value="the asma (asma) family"/>
</dbReference>
<dbReference type="iPTMnet" id="F4ISL7"/>
<dbReference type="PaxDb" id="3702-AT2G25660.1"/>
<dbReference type="ProteomicsDB" id="189734"/>
<dbReference type="EnsemblPlants" id="AT2G25660.1">
    <property type="protein sequence ID" value="AT2G25660.1"/>
    <property type="gene ID" value="AT2G25660"/>
</dbReference>
<dbReference type="EnsemblPlants" id="AT2G25660.4">
    <property type="protein sequence ID" value="AT2G25660.4"/>
    <property type="gene ID" value="AT2G25660"/>
</dbReference>
<dbReference type="GeneID" id="817107"/>
<dbReference type="Gramene" id="AT2G25660.1">
    <property type="protein sequence ID" value="AT2G25660.1"/>
    <property type="gene ID" value="AT2G25660"/>
</dbReference>
<dbReference type="Gramene" id="AT2G25660.4">
    <property type="protein sequence ID" value="AT2G25660.4"/>
    <property type="gene ID" value="AT2G25660"/>
</dbReference>
<dbReference type="KEGG" id="ath:AT2G25660"/>
<dbReference type="Araport" id="AT2G25660"/>
<dbReference type="TAIR" id="AT2G25660">
    <property type="gene designation" value="EMB2410"/>
</dbReference>
<dbReference type="eggNOG" id="ENOG502QTMX">
    <property type="taxonomic scope" value="Eukaryota"/>
</dbReference>
<dbReference type="HOGENOM" id="CLU_000678_0_0_1"/>
<dbReference type="InParanoid" id="F4ISL7"/>
<dbReference type="OMA" id="ANGHIKF"/>
<dbReference type="PRO" id="PR:F4ISL7"/>
<dbReference type="Proteomes" id="UP000006548">
    <property type="component" value="Chromosome 2"/>
</dbReference>
<dbReference type="ExpressionAtlas" id="F4ISL7">
    <property type="expression patterns" value="baseline and differential"/>
</dbReference>
<dbReference type="GO" id="GO:0009501">
    <property type="term" value="C:amyloplast"/>
    <property type="evidence" value="ECO:0007669"/>
    <property type="project" value="EnsemblPlants"/>
</dbReference>
<dbReference type="GO" id="GO:0009706">
    <property type="term" value="C:chloroplast inner membrane"/>
    <property type="evidence" value="ECO:0000314"/>
    <property type="project" value="TAIR"/>
</dbReference>
<dbReference type="GO" id="GO:0031972">
    <property type="term" value="C:chloroplast intermembrane space"/>
    <property type="evidence" value="ECO:0007669"/>
    <property type="project" value="UniProtKB-SubCell"/>
</dbReference>
<dbReference type="GO" id="GO:0005886">
    <property type="term" value="C:plasma membrane"/>
    <property type="evidence" value="ECO:0007669"/>
    <property type="project" value="InterPro"/>
</dbReference>
<dbReference type="GO" id="GO:0009660">
    <property type="term" value="P:amyloplast organization"/>
    <property type="evidence" value="ECO:0007669"/>
    <property type="project" value="EnsemblPlants"/>
</dbReference>
<dbReference type="GO" id="GO:0009306">
    <property type="term" value="P:protein secretion"/>
    <property type="evidence" value="ECO:0007669"/>
    <property type="project" value="InterPro"/>
</dbReference>
<dbReference type="InterPro" id="IPR053022">
    <property type="entry name" value="Chloroplast_translocon_comp"/>
</dbReference>
<dbReference type="InterPro" id="IPR007452">
    <property type="entry name" value="TamB"/>
</dbReference>
<dbReference type="PANTHER" id="PTHR34457">
    <property type="entry name" value="EMBRYO DEFECTIVE 2410"/>
    <property type="match status" value="1"/>
</dbReference>
<dbReference type="PANTHER" id="PTHR34457:SF3">
    <property type="entry name" value="PROTEIN TIC236, CHLOROPLASTIC"/>
    <property type="match status" value="1"/>
</dbReference>
<dbReference type="Pfam" id="PF04357">
    <property type="entry name" value="TamB"/>
    <property type="match status" value="1"/>
</dbReference>
<name>TI236_ARATH</name>
<keyword id="KW-0150">Chloroplast</keyword>
<keyword id="KW-0472">Membrane</keyword>
<keyword id="KW-0934">Plastid</keyword>
<keyword id="KW-1001">Plastid inner membrane</keyword>
<keyword id="KW-0653">Protein transport</keyword>
<keyword id="KW-1185">Reference proteome</keyword>
<keyword id="KW-0809">Transit peptide</keyword>
<keyword id="KW-0812">Transmembrane</keyword>
<keyword id="KW-1133">Transmembrane helix</keyword>
<keyword id="KW-0813">Transport</keyword>
<organism>
    <name type="scientific">Arabidopsis thaliana</name>
    <name type="common">Mouse-ear cress</name>
    <dbReference type="NCBI Taxonomy" id="3702"/>
    <lineage>
        <taxon>Eukaryota</taxon>
        <taxon>Viridiplantae</taxon>
        <taxon>Streptophyta</taxon>
        <taxon>Embryophyta</taxon>
        <taxon>Tracheophyta</taxon>
        <taxon>Spermatophyta</taxon>
        <taxon>Magnoliopsida</taxon>
        <taxon>eudicotyledons</taxon>
        <taxon>Gunneridae</taxon>
        <taxon>Pentapetalae</taxon>
        <taxon>rosids</taxon>
        <taxon>malvids</taxon>
        <taxon>Brassicales</taxon>
        <taxon>Brassicaceae</taxon>
        <taxon>Camelineae</taxon>
        <taxon>Arabidopsis</taxon>
    </lineage>
</organism>
<accession>F4ISL7</accession>
<accession>Q9SL97</accession>
<evidence type="ECO:0000255" key="1"/>
<evidence type="ECO:0000256" key="2">
    <source>
        <dbReference type="SAM" id="MobiDB-lite"/>
    </source>
</evidence>
<evidence type="ECO:0000269" key="3">
    <source>
    </source>
</evidence>
<evidence type="ECO:0000269" key="4">
    <source>
    </source>
</evidence>
<evidence type="ECO:0000303" key="5">
    <source>
    </source>
</evidence>
<evidence type="ECO:0000303" key="6">
    <source>
    </source>
</evidence>
<evidence type="ECO:0000305" key="7"/>
<evidence type="ECO:0000305" key="8">
    <source>
    </source>
</evidence>
<evidence type="ECO:0000312" key="9">
    <source>
        <dbReference type="Araport" id="AT2G25660"/>
    </source>
</evidence>
<proteinExistence type="evidence at protein level"/>